<name>HUTH_STRPQ</name>
<sequence length="513" mass="55469">MTRVINLDGESLTIEDVIAIARQGVACRIDDSAIEAVNASRKIVDDIVSEKRVVYGVTTGFGSLCNVSISPEDTVQLQENLIRTHASGFGDPLPEDAVRAIMLIRINSLVKGYSGIRLSTIEKLLELLNKGVHPYIPEKGSLGASGDLAPLAHMVLPMLGLGKAYYKGELLSGQEALDKAGIDKISLAAKEGLALINGTTVLTAIGALATYDAIQLLKLSDLAGALSLEVHNGITSPFEENLHTIRPQSGQLATARNIRNLHEGSQNTTVATQSRVQDPYTLRCIPQIHGASKDSIAYVKSKVDIEINSVTDNPIICKDGHVISGGNFHGEPMAQPFDFLGIAISEIGNVSERRVERLVNSQLSKLPSFLVKYPGLNSGFMITQYACASLASENKVLAHPASVDSIPSCENQEDFVSMGTTAARKAFEILKNSHRIVATEIMAACQALDLKSENHELGKGTKVAYDLFRKEVNFIEHDKHIEIYDELNKASTVIEDPSFLEAVEQAVELSIQF</sequence>
<feature type="chain" id="PRO_0000411375" description="Histidine ammonia-lyase">
    <location>
        <begin position="1"/>
        <end position="513"/>
    </location>
</feature>
<feature type="modified residue" description="2,3-didehydroalanine (Ser)" evidence="1">
    <location>
        <position position="145"/>
    </location>
</feature>
<feature type="cross-link" description="5-imidazolinone (Ala-Gly)" evidence="1">
    <location>
        <begin position="144"/>
        <end position="146"/>
    </location>
</feature>
<gene>
    <name evidence="1" type="primary">hutH</name>
    <name type="ordered locus">SPs1776</name>
</gene>
<organism>
    <name type="scientific">Streptococcus pyogenes serotype M3 (strain SSI-1)</name>
    <dbReference type="NCBI Taxonomy" id="193567"/>
    <lineage>
        <taxon>Bacteria</taxon>
        <taxon>Bacillati</taxon>
        <taxon>Bacillota</taxon>
        <taxon>Bacilli</taxon>
        <taxon>Lactobacillales</taxon>
        <taxon>Streptococcaceae</taxon>
        <taxon>Streptococcus</taxon>
    </lineage>
</organism>
<keyword id="KW-0963">Cytoplasm</keyword>
<keyword id="KW-0369">Histidine metabolism</keyword>
<keyword id="KW-0456">Lyase</keyword>
<proteinExistence type="inferred from homology"/>
<protein>
    <recommendedName>
        <fullName evidence="1">Histidine ammonia-lyase</fullName>
        <shortName evidence="1">Histidase</shortName>
        <ecNumber evidence="1">4.3.1.3</ecNumber>
    </recommendedName>
</protein>
<dbReference type="EC" id="4.3.1.3" evidence="1"/>
<dbReference type="EMBL" id="BA000034">
    <property type="protein sequence ID" value="BAC64871.1"/>
    <property type="molecule type" value="Genomic_DNA"/>
</dbReference>
<dbReference type="RefSeq" id="WP_011055077.1">
    <property type="nucleotide sequence ID" value="NC_004606.1"/>
</dbReference>
<dbReference type="SMR" id="P0DB75"/>
<dbReference type="KEGG" id="sps:SPs1776"/>
<dbReference type="HOGENOM" id="CLU_014801_4_0_9"/>
<dbReference type="UniPathway" id="UPA00379">
    <property type="reaction ID" value="UER00549"/>
</dbReference>
<dbReference type="GO" id="GO:0005737">
    <property type="term" value="C:cytoplasm"/>
    <property type="evidence" value="ECO:0007669"/>
    <property type="project" value="UniProtKB-SubCell"/>
</dbReference>
<dbReference type="GO" id="GO:0004397">
    <property type="term" value="F:histidine ammonia-lyase activity"/>
    <property type="evidence" value="ECO:0007669"/>
    <property type="project" value="UniProtKB-UniRule"/>
</dbReference>
<dbReference type="GO" id="GO:0019556">
    <property type="term" value="P:L-histidine catabolic process to glutamate and formamide"/>
    <property type="evidence" value="ECO:0007669"/>
    <property type="project" value="UniProtKB-UniPathway"/>
</dbReference>
<dbReference type="GO" id="GO:0019557">
    <property type="term" value="P:L-histidine catabolic process to glutamate and formate"/>
    <property type="evidence" value="ECO:0007669"/>
    <property type="project" value="UniProtKB-UniPathway"/>
</dbReference>
<dbReference type="CDD" id="cd00332">
    <property type="entry name" value="PAL-HAL"/>
    <property type="match status" value="1"/>
</dbReference>
<dbReference type="FunFam" id="1.10.275.10:FF:000005">
    <property type="entry name" value="Histidine ammonia-lyase"/>
    <property type="match status" value="1"/>
</dbReference>
<dbReference type="FunFam" id="1.20.200.10:FF:000003">
    <property type="entry name" value="Histidine ammonia-lyase"/>
    <property type="match status" value="1"/>
</dbReference>
<dbReference type="Gene3D" id="1.20.200.10">
    <property type="entry name" value="Fumarase/aspartase (Central domain)"/>
    <property type="match status" value="1"/>
</dbReference>
<dbReference type="Gene3D" id="1.10.275.10">
    <property type="entry name" value="Fumarase/aspartase (N-terminal domain)"/>
    <property type="match status" value="1"/>
</dbReference>
<dbReference type="HAMAP" id="MF_00229">
    <property type="entry name" value="His_ammonia_lyase"/>
    <property type="match status" value="1"/>
</dbReference>
<dbReference type="InterPro" id="IPR001106">
    <property type="entry name" value="Aromatic_Lyase"/>
</dbReference>
<dbReference type="InterPro" id="IPR024083">
    <property type="entry name" value="Fumarase/histidase_N"/>
</dbReference>
<dbReference type="InterPro" id="IPR005921">
    <property type="entry name" value="HutH"/>
</dbReference>
<dbReference type="InterPro" id="IPR008948">
    <property type="entry name" value="L-Aspartase-like"/>
</dbReference>
<dbReference type="InterPro" id="IPR022313">
    <property type="entry name" value="Phe/His_NH3-lyase_AS"/>
</dbReference>
<dbReference type="NCBIfam" id="TIGR01225">
    <property type="entry name" value="hutH"/>
    <property type="match status" value="1"/>
</dbReference>
<dbReference type="NCBIfam" id="NF006871">
    <property type="entry name" value="PRK09367.1"/>
    <property type="match status" value="1"/>
</dbReference>
<dbReference type="PANTHER" id="PTHR10362">
    <property type="entry name" value="HISTIDINE AMMONIA-LYASE"/>
    <property type="match status" value="1"/>
</dbReference>
<dbReference type="Pfam" id="PF00221">
    <property type="entry name" value="Lyase_aromatic"/>
    <property type="match status" value="1"/>
</dbReference>
<dbReference type="SUPFAM" id="SSF48557">
    <property type="entry name" value="L-aspartase-like"/>
    <property type="match status" value="1"/>
</dbReference>
<dbReference type="PROSITE" id="PS00488">
    <property type="entry name" value="PAL_HISTIDASE"/>
    <property type="match status" value="1"/>
</dbReference>
<accession>P0DB75</accession>
<accession>Q8K5L5</accession>
<reference key="1">
    <citation type="journal article" date="2003" name="Genome Res.">
        <title>Genome sequence of an M3 strain of Streptococcus pyogenes reveals a large-scale genomic rearrangement in invasive strains and new insights into phage evolution.</title>
        <authorList>
            <person name="Nakagawa I."/>
            <person name="Kurokawa K."/>
            <person name="Yamashita A."/>
            <person name="Nakata M."/>
            <person name="Tomiyasu Y."/>
            <person name="Okahashi N."/>
            <person name="Kawabata S."/>
            <person name="Yamazaki K."/>
            <person name="Shiba T."/>
            <person name="Yasunaga T."/>
            <person name="Hayashi H."/>
            <person name="Hattori M."/>
            <person name="Hamada S."/>
        </authorList>
    </citation>
    <scope>NUCLEOTIDE SEQUENCE [LARGE SCALE GENOMIC DNA]</scope>
    <source>
        <strain>SSI-1</strain>
    </source>
</reference>
<comment type="catalytic activity">
    <reaction evidence="1">
        <text>L-histidine = trans-urocanate + NH4(+)</text>
        <dbReference type="Rhea" id="RHEA:21232"/>
        <dbReference type="ChEBI" id="CHEBI:17771"/>
        <dbReference type="ChEBI" id="CHEBI:28938"/>
        <dbReference type="ChEBI" id="CHEBI:57595"/>
        <dbReference type="EC" id="4.3.1.3"/>
    </reaction>
</comment>
<comment type="pathway">
    <text evidence="1">Amino-acid degradation; L-histidine degradation into L-glutamate; N-formimidoyl-L-glutamate from L-histidine: step 1/3.</text>
</comment>
<comment type="subcellular location">
    <subcellularLocation>
        <location evidence="1">Cytoplasm</location>
    </subcellularLocation>
</comment>
<comment type="PTM">
    <text evidence="1">Contains an active site 4-methylidene-imidazol-5-one (MIO), which is formed autocatalytically by cyclization and dehydration of residues Ala-Ser-Gly.</text>
</comment>
<comment type="similarity">
    <text evidence="1">Belongs to the PAL/histidase family.</text>
</comment>
<evidence type="ECO:0000255" key="1">
    <source>
        <dbReference type="HAMAP-Rule" id="MF_00229"/>
    </source>
</evidence>